<comment type="function">
    <text evidence="1">Involved in the import of serine and threonine into the cell, with the concomitant import of sodium (symport system).</text>
</comment>
<comment type="catalytic activity">
    <reaction evidence="1">
        <text>L-serine(in) + Na(+)(in) = L-serine(out) + Na(+)(out)</text>
        <dbReference type="Rhea" id="RHEA:29575"/>
        <dbReference type="ChEBI" id="CHEBI:29101"/>
        <dbReference type="ChEBI" id="CHEBI:33384"/>
    </reaction>
    <physiologicalReaction direction="right-to-left" evidence="1">
        <dbReference type="Rhea" id="RHEA:29577"/>
    </physiologicalReaction>
</comment>
<comment type="catalytic activity">
    <reaction evidence="1">
        <text>L-threonine(in) + Na(+)(in) = L-threonine(out) + Na(+)(out)</text>
        <dbReference type="Rhea" id="RHEA:69999"/>
        <dbReference type="ChEBI" id="CHEBI:29101"/>
        <dbReference type="ChEBI" id="CHEBI:57926"/>
    </reaction>
    <physiologicalReaction direction="right-to-left" evidence="1">
        <dbReference type="Rhea" id="RHEA:70001"/>
    </physiologicalReaction>
</comment>
<comment type="subcellular location">
    <subcellularLocation>
        <location evidence="1">Cell inner membrane</location>
        <topology evidence="1">Multi-pass membrane protein</topology>
    </subcellularLocation>
</comment>
<comment type="similarity">
    <text evidence="1">Belongs to the dicarboxylate/amino acid:cation symporter (DAACS) (TC 2.A.23) family.</text>
</comment>
<accession>A1S7P9</accession>
<reference key="1">
    <citation type="submission" date="2006-12" db="EMBL/GenBank/DDBJ databases">
        <title>Complete sequence of Shewanella amazonensis SB2B.</title>
        <authorList>
            <consortium name="US DOE Joint Genome Institute"/>
            <person name="Copeland A."/>
            <person name="Lucas S."/>
            <person name="Lapidus A."/>
            <person name="Barry K."/>
            <person name="Detter J.C."/>
            <person name="Glavina del Rio T."/>
            <person name="Hammon N."/>
            <person name="Israni S."/>
            <person name="Dalin E."/>
            <person name="Tice H."/>
            <person name="Pitluck S."/>
            <person name="Munk A.C."/>
            <person name="Brettin T."/>
            <person name="Bruce D."/>
            <person name="Han C."/>
            <person name="Tapia R."/>
            <person name="Gilna P."/>
            <person name="Schmutz J."/>
            <person name="Larimer F."/>
            <person name="Land M."/>
            <person name="Hauser L."/>
            <person name="Kyrpides N."/>
            <person name="Mikhailova N."/>
            <person name="Fredrickson J."/>
            <person name="Richardson P."/>
        </authorList>
    </citation>
    <scope>NUCLEOTIDE SEQUENCE [LARGE SCALE GENOMIC DNA]</scope>
    <source>
        <strain>ATCC BAA-1098 / SB2B</strain>
    </source>
</reference>
<name>SSTT_SHEAM</name>
<evidence type="ECO:0000255" key="1">
    <source>
        <dbReference type="HAMAP-Rule" id="MF_01582"/>
    </source>
</evidence>
<dbReference type="EMBL" id="CP000507">
    <property type="protein sequence ID" value="ABM00406.1"/>
    <property type="molecule type" value="Genomic_DNA"/>
</dbReference>
<dbReference type="RefSeq" id="WP_011760313.1">
    <property type="nucleotide sequence ID" value="NC_008700.1"/>
</dbReference>
<dbReference type="SMR" id="A1S7P9"/>
<dbReference type="STRING" id="326297.Sama_2200"/>
<dbReference type="KEGG" id="saz:Sama_2200"/>
<dbReference type="eggNOG" id="COG3633">
    <property type="taxonomic scope" value="Bacteria"/>
</dbReference>
<dbReference type="HOGENOM" id="CLU_044581_0_0_6"/>
<dbReference type="OrthoDB" id="9768885at2"/>
<dbReference type="Proteomes" id="UP000009175">
    <property type="component" value="Chromosome"/>
</dbReference>
<dbReference type="GO" id="GO:0005886">
    <property type="term" value="C:plasma membrane"/>
    <property type="evidence" value="ECO:0007669"/>
    <property type="project" value="UniProtKB-SubCell"/>
</dbReference>
<dbReference type="GO" id="GO:0005295">
    <property type="term" value="F:neutral L-amino acid:sodium symporter activity"/>
    <property type="evidence" value="ECO:0007669"/>
    <property type="project" value="TreeGrafter"/>
</dbReference>
<dbReference type="GO" id="GO:0032329">
    <property type="term" value="P:serine transport"/>
    <property type="evidence" value="ECO:0007669"/>
    <property type="project" value="InterPro"/>
</dbReference>
<dbReference type="GO" id="GO:0015826">
    <property type="term" value="P:threonine transport"/>
    <property type="evidence" value="ECO:0007669"/>
    <property type="project" value="InterPro"/>
</dbReference>
<dbReference type="FunFam" id="1.10.3860.10:FF:000003">
    <property type="entry name" value="Serine/threonine transporter sstT"/>
    <property type="match status" value="1"/>
</dbReference>
<dbReference type="Gene3D" id="1.10.3860.10">
    <property type="entry name" value="Sodium:dicarboxylate symporter"/>
    <property type="match status" value="1"/>
</dbReference>
<dbReference type="HAMAP" id="MF_01582">
    <property type="entry name" value="Ser_Thr_transp_SstT"/>
    <property type="match status" value="1"/>
</dbReference>
<dbReference type="InterPro" id="IPR001991">
    <property type="entry name" value="Na-dicarboxylate_symporter"/>
</dbReference>
<dbReference type="InterPro" id="IPR036458">
    <property type="entry name" value="Na:dicarbo_symporter_sf"/>
</dbReference>
<dbReference type="InterPro" id="IPR023025">
    <property type="entry name" value="Ser_Thr_transp_SstT"/>
</dbReference>
<dbReference type="NCBIfam" id="NF010151">
    <property type="entry name" value="PRK13628.1"/>
    <property type="match status" value="1"/>
</dbReference>
<dbReference type="PANTHER" id="PTHR42865">
    <property type="entry name" value="PROTON/GLUTAMATE-ASPARTATE SYMPORTER"/>
    <property type="match status" value="1"/>
</dbReference>
<dbReference type="PANTHER" id="PTHR42865:SF8">
    <property type="entry name" value="SERINE_THREONINE TRANSPORTER SSTT"/>
    <property type="match status" value="1"/>
</dbReference>
<dbReference type="Pfam" id="PF00375">
    <property type="entry name" value="SDF"/>
    <property type="match status" value="1"/>
</dbReference>
<dbReference type="PRINTS" id="PR00173">
    <property type="entry name" value="EDTRNSPORT"/>
</dbReference>
<dbReference type="SUPFAM" id="SSF118215">
    <property type="entry name" value="Proton glutamate symport protein"/>
    <property type="match status" value="1"/>
</dbReference>
<protein>
    <recommendedName>
        <fullName evidence="1">Serine/threonine transporter SstT</fullName>
    </recommendedName>
    <alternativeName>
        <fullName evidence="1">Na(+)/serine-threonine symporter</fullName>
    </alternativeName>
</protein>
<organism>
    <name type="scientific">Shewanella amazonensis (strain ATCC BAA-1098 / SB2B)</name>
    <dbReference type="NCBI Taxonomy" id="326297"/>
    <lineage>
        <taxon>Bacteria</taxon>
        <taxon>Pseudomonadati</taxon>
        <taxon>Pseudomonadota</taxon>
        <taxon>Gammaproteobacteria</taxon>
        <taxon>Alteromonadales</taxon>
        <taxon>Shewanellaceae</taxon>
        <taxon>Shewanella</taxon>
    </lineage>
</organism>
<proteinExistence type="inferred from homology"/>
<feature type="chain" id="PRO_0000309120" description="Serine/threonine transporter SstT">
    <location>
        <begin position="1"/>
        <end position="405"/>
    </location>
</feature>
<feature type="transmembrane region" description="Helical" evidence="1">
    <location>
        <begin position="13"/>
        <end position="33"/>
    </location>
</feature>
<feature type="transmembrane region" description="Helical" evidence="1">
    <location>
        <begin position="43"/>
        <end position="63"/>
    </location>
</feature>
<feature type="transmembrane region" description="Helical" evidence="1">
    <location>
        <begin position="82"/>
        <end position="102"/>
    </location>
</feature>
<feature type="transmembrane region" description="Helical" evidence="1">
    <location>
        <begin position="141"/>
        <end position="161"/>
    </location>
</feature>
<feature type="transmembrane region" description="Helical" evidence="1">
    <location>
        <begin position="185"/>
        <end position="205"/>
    </location>
</feature>
<feature type="transmembrane region" description="Helical" evidence="1">
    <location>
        <begin position="217"/>
        <end position="237"/>
    </location>
</feature>
<feature type="transmembrane region" description="Helical" evidence="1">
    <location>
        <begin position="298"/>
        <end position="318"/>
    </location>
</feature>
<feature type="transmembrane region" description="Helical" evidence="1">
    <location>
        <begin position="339"/>
        <end position="359"/>
    </location>
</feature>
<keyword id="KW-0029">Amino-acid transport</keyword>
<keyword id="KW-0997">Cell inner membrane</keyword>
<keyword id="KW-1003">Cell membrane</keyword>
<keyword id="KW-0472">Membrane</keyword>
<keyword id="KW-1185">Reference proteome</keyword>
<keyword id="KW-0769">Symport</keyword>
<keyword id="KW-0812">Transmembrane</keyword>
<keyword id="KW-1133">Transmembrane helix</keyword>
<keyword id="KW-0813">Transport</keyword>
<gene>
    <name evidence="1" type="primary">sstT</name>
    <name type="ordered locus">Sama_2200</name>
</gene>
<sequence>MSTEKSLLANAAGGSLVLQIFVGIIAGVALAGFSPEAANQVAFLGDLFVGALKAIAPVLVFVLVASSIANQVSGAQTNMRPIILLYLVGTFAAALTAVLMSFAFPTSLVLIDAAAGANPPEGIGQVLNTLLFKLVDNPVNALINANYIGLLAWGVGLGIALRHASTSTKNMLHDVSHGVSQLVRFVICLAPIGIFGLVAATIAQTGFEALAAYAQLLGVLLGAMAVIAFVVNPLIVFLKIRRNPYPLVFKCLRESGVTAFFTRSSAANIPVNMALCERLKLHEDTYSVSIPLGATINMAGAAITITVLTLAAVHTLGIEVDLATALLLSVIAAVSACGASGVAGGSLLLIPLACSLFGISNDIAMQVVAVGFTIGVIQDSAETALNSSTDVLFTAAACEAAERKA</sequence>